<keyword id="KW-0004">4Fe-4S</keyword>
<keyword id="KW-0408">Iron</keyword>
<keyword id="KW-0411">Iron-sulfur</keyword>
<keyword id="KW-0413">Isomerase</keyword>
<keyword id="KW-0456">Lyase</keyword>
<keyword id="KW-0479">Metal-binding</keyword>
<keyword id="KW-1185">Reference proteome</keyword>
<keyword id="KW-0816">Tricarboxylic acid cycle</keyword>
<gene>
    <name evidence="2" type="primary">fumA</name>
    <name type="ordered locus">c2004</name>
</gene>
<dbReference type="EC" id="4.2.1.2" evidence="2"/>
<dbReference type="EC" id="5.3.2.2" evidence="2"/>
<dbReference type="EMBL" id="AE014075">
    <property type="protein sequence ID" value="AAN80464.1"/>
    <property type="molecule type" value="Genomic_DNA"/>
</dbReference>
<dbReference type="SMR" id="P0AC34"/>
<dbReference type="STRING" id="199310.c2004"/>
<dbReference type="KEGG" id="ecc:c2004"/>
<dbReference type="eggNOG" id="COG1838">
    <property type="taxonomic scope" value="Bacteria"/>
</dbReference>
<dbReference type="eggNOG" id="COG1951">
    <property type="taxonomic scope" value="Bacteria"/>
</dbReference>
<dbReference type="HOGENOM" id="CLU_026758_0_0_6"/>
<dbReference type="BioCyc" id="ECOL199310:C2004-MONOMER"/>
<dbReference type="UniPathway" id="UPA00223">
    <property type="reaction ID" value="UER01007"/>
</dbReference>
<dbReference type="Proteomes" id="UP000001410">
    <property type="component" value="Chromosome"/>
</dbReference>
<dbReference type="GO" id="GO:0051539">
    <property type="term" value="F:4 iron, 4 sulfur cluster binding"/>
    <property type="evidence" value="ECO:0007669"/>
    <property type="project" value="UniProtKB-KW"/>
</dbReference>
<dbReference type="GO" id="GO:0004333">
    <property type="term" value="F:fumarate hydratase activity"/>
    <property type="evidence" value="ECO:0007669"/>
    <property type="project" value="UniProtKB-EC"/>
</dbReference>
<dbReference type="GO" id="GO:0046872">
    <property type="term" value="F:metal ion binding"/>
    <property type="evidence" value="ECO:0007669"/>
    <property type="project" value="UniProtKB-KW"/>
</dbReference>
<dbReference type="GO" id="GO:0050163">
    <property type="term" value="F:oxaloacetate tautomerase activity"/>
    <property type="evidence" value="ECO:0007669"/>
    <property type="project" value="UniProtKB-EC"/>
</dbReference>
<dbReference type="GO" id="GO:0006099">
    <property type="term" value="P:tricarboxylic acid cycle"/>
    <property type="evidence" value="ECO:0007669"/>
    <property type="project" value="UniProtKB-UniPathway"/>
</dbReference>
<dbReference type="FunFam" id="3.20.130.10:FF:000001">
    <property type="entry name" value="Fumarate hydratase class I"/>
    <property type="match status" value="1"/>
</dbReference>
<dbReference type="Gene3D" id="3.20.130.10">
    <property type="entry name" value="Fe-S hydro-lyase, tartrate dehydratase beta-type, catalytic domain"/>
    <property type="match status" value="1"/>
</dbReference>
<dbReference type="InterPro" id="IPR051208">
    <property type="entry name" value="Class-I_Fumarase/Tartrate_DH"/>
</dbReference>
<dbReference type="InterPro" id="IPR004646">
    <property type="entry name" value="Fe-S_hydro-lyase_TtdA-typ_cat"/>
</dbReference>
<dbReference type="InterPro" id="IPR004647">
    <property type="entry name" value="Fe-S_hydro-lyase_TtdB-typ_cat"/>
</dbReference>
<dbReference type="InterPro" id="IPR036660">
    <property type="entry name" value="Fe-S_hydroAse_TtdB_cat_sf"/>
</dbReference>
<dbReference type="InterPro" id="IPR011167">
    <property type="entry name" value="Fe_dep_fumarate_hydratase"/>
</dbReference>
<dbReference type="InterPro" id="IPR020557">
    <property type="entry name" value="Fumarate_lyase_CS"/>
</dbReference>
<dbReference type="NCBIfam" id="NF011919">
    <property type="entry name" value="PRK15390.1"/>
    <property type="match status" value="1"/>
</dbReference>
<dbReference type="NCBIfam" id="NF011920">
    <property type="entry name" value="PRK15391.1"/>
    <property type="match status" value="1"/>
</dbReference>
<dbReference type="NCBIfam" id="TIGR00722">
    <property type="entry name" value="ttdA_fumA_fumB"/>
    <property type="match status" value="1"/>
</dbReference>
<dbReference type="NCBIfam" id="TIGR00723">
    <property type="entry name" value="ttdB_fumA_fumB"/>
    <property type="match status" value="1"/>
</dbReference>
<dbReference type="PANTHER" id="PTHR30389:SF0">
    <property type="entry name" value="FUMARATE HYDRATASE CLASS I, AEROBIC"/>
    <property type="match status" value="1"/>
</dbReference>
<dbReference type="PANTHER" id="PTHR30389">
    <property type="entry name" value="FUMARATE HYDRATASE-RELATED"/>
    <property type="match status" value="1"/>
</dbReference>
<dbReference type="Pfam" id="PF05681">
    <property type="entry name" value="Fumerase"/>
    <property type="match status" value="1"/>
</dbReference>
<dbReference type="Pfam" id="PF05683">
    <property type="entry name" value="Fumerase_C"/>
    <property type="match status" value="1"/>
</dbReference>
<dbReference type="PIRSF" id="PIRSF001394">
    <property type="entry name" value="Fe_dep_fumar_hy"/>
    <property type="match status" value="1"/>
</dbReference>
<dbReference type="SUPFAM" id="SSF117457">
    <property type="entry name" value="FumA C-terminal domain-like"/>
    <property type="match status" value="1"/>
</dbReference>
<dbReference type="PROSITE" id="PS00163">
    <property type="entry name" value="FUMARATE_LYASES"/>
    <property type="match status" value="1"/>
</dbReference>
<feature type="initiator methionine" description="Removed" evidence="2">
    <location>
        <position position="1"/>
    </location>
</feature>
<feature type="chain" id="PRO_0000195658" description="Fumarate hydratase class I, aerobic">
    <location>
        <begin position="2"/>
        <end position="548"/>
    </location>
</feature>
<feature type="binding site" evidence="1">
    <location>
        <position position="105"/>
    </location>
    <ligand>
        <name>[4Fe-4S] cluster</name>
        <dbReference type="ChEBI" id="CHEBI:49883"/>
    </ligand>
</feature>
<feature type="binding site" evidence="1">
    <location>
        <position position="224"/>
    </location>
    <ligand>
        <name>[4Fe-4S] cluster</name>
        <dbReference type="ChEBI" id="CHEBI:49883"/>
    </ligand>
</feature>
<feature type="binding site" evidence="1">
    <location>
        <position position="318"/>
    </location>
    <ligand>
        <name>[4Fe-4S] cluster</name>
        <dbReference type="ChEBI" id="CHEBI:49883"/>
    </ligand>
</feature>
<accession>P0AC34</accession>
<accession>P00923</accession>
<accession>P76889</accession>
<sequence length="548" mass="60299">MSNKPFHYQAPFPLKKDDTEYYLLTSEHVSVSEFEGQEILKVAPEALTLLARQAFHDASFMLRPAHQQQVADILRDPEASENDKYVALQFLRNSDIAAKGVLPTCQDTGTAIIVGKKGQRVWTGGGDEAALARGVYNTYIEDNLRYSQNAPLDMYKEVNTGTNLPAQIDLYAVDGDEYKFLCIAKGGGSANKTYLYQETKALLTPGKLKNYLVEKMRTLGTAACPPYHIAFVIGGTSAETNLKTVKLASAKYYDELPTEGNEHGQAFRDVELEKELLIEAQNLGLGAQFGGKYFAHDIRVIRLPRHGASCPVGMGVSCSADRNIKAKINRQGIWIEKLEHNPGKYIPEELRKAGEGEAVRVDLNRPMKEILAQLSQYPVSTRLSLNGTIIVGRDIAHAKLKERMDNGEGLPQYIKDHPIYYAGPAKTPEGYASGSLGPTTAGRMDSYVDQLQAQGGSMIMLAKGNRSQQVTDACKKHGGFYLGSIGGPAAVLAQGSIKSLECVEYPELGMEAIWKIEVEDFPAFILVDDKGNDFFQQIQLTQCTRCVK</sequence>
<protein>
    <recommendedName>
        <fullName evidence="2">Fumarate hydratase class I, aerobic</fullName>
        <ecNumber evidence="2">4.2.1.2</ecNumber>
    </recommendedName>
    <alternativeName>
        <fullName evidence="2">Fumarase A</fullName>
    </alternativeName>
    <alternativeName>
        <fullName evidence="2">Oxaloacetate keto--enol-isomerase</fullName>
        <shortName evidence="2">OAAKE isomerase</shortName>
    </alternativeName>
    <alternativeName>
        <fullName evidence="2">Oxaloacetate tautomerase</fullName>
        <ecNumber evidence="2">5.3.2.2</ecNumber>
    </alternativeName>
</protein>
<comment type="function">
    <text evidence="2">Catalyzes the reversible hydration of fumarate to (S)-malate. Functions as an aerobic enzyme in the direction of malate formation as part of the citric acid cycle. Accounts for about 80% of the fumarase activity when the bacteria grow aerobically. To a lesser extent, also displays D-tartrate dehydratase activity in vitro, but is not able to convert (R)-malate, L-tartrate or meso-tartrate. Can also catalyze the isomerization of enol- to keto-oxaloacetate.</text>
</comment>
<comment type="catalytic activity">
    <reaction evidence="2">
        <text>(S)-malate = fumarate + H2O</text>
        <dbReference type="Rhea" id="RHEA:12460"/>
        <dbReference type="ChEBI" id="CHEBI:15377"/>
        <dbReference type="ChEBI" id="CHEBI:15589"/>
        <dbReference type="ChEBI" id="CHEBI:29806"/>
        <dbReference type="EC" id="4.2.1.2"/>
    </reaction>
</comment>
<comment type="catalytic activity">
    <reaction evidence="2">
        <text>oxaloacetate = enol-oxaloacetate</text>
        <dbReference type="Rhea" id="RHEA:16021"/>
        <dbReference type="ChEBI" id="CHEBI:16452"/>
        <dbReference type="ChEBI" id="CHEBI:17479"/>
        <dbReference type="EC" id="5.3.2.2"/>
    </reaction>
</comment>
<comment type="cofactor">
    <cofactor evidence="2">
        <name>[4Fe-4S] cluster</name>
        <dbReference type="ChEBI" id="CHEBI:49883"/>
    </cofactor>
    <text evidence="2">Binds 1 [4Fe-4S] cluster per subunit.</text>
</comment>
<comment type="pathway">
    <text evidence="2">Carbohydrate metabolism; tricarboxylic acid cycle; (S)-malate from fumarate: step 1/1.</text>
</comment>
<comment type="subunit">
    <text evidence="2">Homodimer.</text>
</comment>
<comment type="induction">
    <text evidence="2">Is expressed under aerobic conditions. Is repressed by glucose and anaerobiosis.</text>
</comment>
<comment type="similarity">
    <text evidence="3">Belongs to the class-I fumarase family.</text>
</comment>
<reference key="1">
    <citation type="journal article" date="2002" name="Proc. Natl. Acad. Sci. U.S.A.">
        <title>Extensive mosaic structure revealed by the complete genome sequence of uropathogenic Escherichia coli.</title>
        <authorList>
            <person name="Welch R.A."/>
            <person name="Burland V."/>
            <person name="Plunkett G. III"/>
            <person name="Redford P."/>
            <person name="Roesch P."/>
            <person name="Rasko D."/>
            <person name="Buckles E.L."/>
            <person name="Liou S.-R."/>
            <person name="Boutin A."/>
            <person name="Hackett J."/>
            <person name="Stroud D."/>
            <person name="Mayhew G.F."/>
            <person name="Rose D.J."/>
            <person name="Zhou S."/>
            <person name="Schwartz D.C."/>
            <person name="Perna N.T."/>
            <person name="Mobley H.L.T."/>
            <person name="Donnenberg M.S."/>
            <person name="Blattner F.R."/>
        </authorList>
    </citation>
    <scope>NUCLEOTIDE SEQUENCE [LARGE SCALE GENOMIC DNA]</scope>
    <source>
        <strain>CFT073 / ATCC 700928 / UPEC</strain>
    </source>
</reference>
<organism>
    <name type="scientific">Escherichia coli O6:H1 (strain CFT073 / ATCC 700928 / UPEC)</name>
    <dbReference type="NCBI Taxonomy" id="199310"/>
    <lineage>
        <taxon>Bacteria</taxon>
        <taxon>Pseudomonadati</taxon>
        <taxon>Pseudomonadota</taxon>
        <taxon>Gammaproteobacteria</taxon>
        <taxon>Enterobacterales</taxon>
        <taxon>Enterobacteriaceae</taxon>
        <taxon>Escherichia</taxon>
    </lineage>
</organism>
<evidence type="ECO:0000250" key="1">
    <source>
        <dbReference type="UniProtKB" id="E9AE57"/>
    </source>
</evidence>
<evidence type="ECO:0000250" key="2">
    <source>
        <dbReference type="UniProtKB" id="P0AC33"/>
    </source>
</evidence>
<evidence type="ECO:0000305" key="3"/>
<name>FUMA_ECOL6</name>
<proteinExistence type="inferred from homology"/>